<name>3MGH_RICAE</name>
<dbReference type="EC" id="3.2.2.-" evidence="1"/>
<dbReference type="EMBL" id="CP001612">
    <property type="protein sequence ID" value="ACP53376.1"/>
    <property type="molecule type" value="Genomic_DNA"/>
</dbReference>
<dbReference type="RefSeq" id="WP_012719608.1">
    <property type="nucleotide sequence ID" value="NC_012633.1"/>
</dbReference>
<dbReference type="SMR" id="C3PN66"/>
<dbReference type="KEGG" id="raf:RAF_ORF0446"/>
<dbReference type="HOGENOM" id="CLU_060471_4_1_5"/>
<dbReference type="Proteomes" id="UP000002305">
    <property type="component" value="Chromosome"/>
</dbReference>
<dbReference type="GO" id="GO:0003905">
    <property type="term" value="F:alkylbase DNA N-glycosylase activity"/>
    <property type="evidence" value="ECO:0007669"/>
    <property type="project" value="InterPro"/>
</dbReference>
<dbReference type="GO" id="GO:0003677">
    <property type="term" value="F:DNA binding"/>
    <property type="evidence" value="ECO:0007669"/>
    <property type="project" value="InterPro"/>
</dbReference>
<dbReference type="GO" id="GO:0006284">
    <property type="term" value="P:base-excision repair"/>
    <property type="evidence" value="ECO:0007669"/>
    <property type="project" value="InterPro"/>
</dbReference>
<dbReference type="CDD" id="cd00540">
    <property type="entry name" value="AAG"/>
    <property type="match status" value="1"/>
</dbReference>
<dbReference type="Gene3D" id="3.10.300.10">
    <property type="entry name" value="Methylpurine-DNA glycosylase (MPG)"/>
    <property type="match status" value="2"/>
</dbReference>
<dbReference type="HAMAP" id="MF_00527">
    <property type="entry name" value="3MGH"/>
    <property type="match status" value="1"/>
</dbReference>
<dbReference type="InterPro" id="IPR011034">
    <property type="entry name" value="Formyl_transferase-like_C_sf"/>
</dbReference>
<dbReference type="InterPro" id="IPR003180">
    <property type="entry name" value="MPG"/>
</dbReference>
<dbReference type="InterPro" id="IPR036995">
    <property type="entry name" value="MPG_sf"/>
</dbReference>
<dbReference type="NCBIfam" id="TIGR00567">
    <property type="entry name" value="3mg"/>
    <property type="match status" value="1"/>
</dbReference>
<dbReference type="NCBIfam" id="NF002004">
    <property type="entry name" value="PRK00802.1-4"/>
    <property type="match status" value="1"/>
</dbReference>
<dbReference type="PANTHER" id="PTHR10429">
    <property type="entry name" value="DNA-3-METHYLADENINE GLYCOSYLASE"/>
    <property type="match status" value="1"/>
</dbReference>
<dbReference type="PANTHER" id="PTHR10429:SF0">
    <property type="entry name" value="DNA-3-METHYLADENINE GLYCOSYLASE"/>
    <property type="match status" value="1"/>
</dbReference>
<dbReference type="Pfam" id="PF02245">
    <property type="entry name" value="Pur_DNA_glyco"/>
    <property type="match status" value="1"/>
</dbReference>
<dbReference type="SUPFAM" id="SSF50486">
    <property type="entry name" value="FMT C-terminal domain-like"/>
    <property type="match status" value="1"/>
</dbReference>
<sequence>MNKLIPVPREFFARDTNVVSTELIGKALYFQGKTAIITETESYIGQNDPACHAARGRTKRTDIMFGPAGFSYVYLIYGMYYCLNFVTEAKGFPAATLIRGVHVISPENLYLNGPGKLCKYLGINISHNKCDLINNNEFFVGDIGLKLPYSTTARIGITKGTDKLWRYVVTDITNLISQYNVQP</sequence>
<feature type="chain" id="PRO_1000211764" description="Putative 3-methyladenine DNA glycosylase">
    <location>
        <begin position="1"/>
        <end position="183"/>
    </location>
</feature>
<comment type="similarity">
    <text evidence="1">Belongs to the DNA glycosylase MPG family.</text>
</comment>
<protein>
    <recommendedName>
        <fullName evidence="1">Putative 3-methyladenine DNA glycosylase</fullName>
        <ecNumber evidence="1">3.2.2.-</ecNumber>
    </recommendedName>
</protein>
<reference key="1">
    <citation type="journal article" date="2009" name="BMC Genomics">
        <title>Analysis of the Rickettsia africae genome reveals that virulence acquisition in Rickettsia species may be explained by genome reduction.</title>
        <authorList>
            <person name="Fournier P.-E."/>
            <person name="El Karkouri K."/>
            <person name="Leroy Q."/>
            <person name="Robert C."/>
            <person name="Giumelli B."/>
            <person name="Renesto P."/>
            <person name="Socolovschi C."/>
            <person name="Parola P."/>
            <person name="Audic S."/>
            <person name="Raoult D."/>
        </authorList>
    </citation>
    <scope>NUCLEOTIDE SEQUENCE [LARGE SCALE GENOMIC DNA]</scope>
    <source>
        <strain>ESF-5</strain>
    </source>
</reference>
<accession>C3PN66</accession>
<keyword id="KW-0227">DNA damage</keyword>
<keyword id="KW-0234">DNA repair</keyword>
<keyword id="KW-0378">Hydrolase</keyword>
<evidence type="ECO:0000255" key="1">
    <source>
        <dbReference type="HAMAP-Rule" id="MF_00527"/>
    </source>
</evidence>
<gene>
    <name type="ordered locus">RAF_ORF0446</name>
</gene>
<organism>
    <name type="scientific">Rickettsia africae (strain ESF-5)</name>
    <dbReference type="NCBI Taxonomy" id="347255"/>
    <lineage>
        <taxon>Bacteria</taxon>
        <taxon>Pseudomonadati</taxon>
        <taxon>Pseudomonadota</taxon>
        <taxon>Alphaproteobacteria</taxon>
        <taxon>Rickettsiales</taxon>
        <taxon>Rickettsiaceae</taxon>
        <taxon>Rickettsieae</taxon>
        <taxon>Rickettsia</taxon>
        <taxon>spotted fever group</taxon>
    </lineage>
</organism>
<proteinExistence type="inferred from homology"/>